<reference evidence="5 6" key="1">
    <citation type="journal article" date="1995" name="J. Biol. Chem.">
        <title>Cloning of a novel family of mammalian GTP-binding proteins (RagA, RagBs, RagBl) with remote similarity to the Ras-related GTPases.</title>
        <authorList>
            <person name="Schuermann A."/>
            <person name="Brauers A."/>
            <person name="Massmann S."/>
            <person name="Becker W."/>
            <person name="Joost H.-G."/>
        </authorList>
    </citation>
    <scope>NUCLEOTIDE SEQUENCE [MRNA]</scope>
    <scope>TISSUE SPECIFICITY</scope>
    <scope>GTP-BINDING</scope>
    <source>
        <strain evidence="6">Sprague-Dawley</strain>
        <tissue evidence="6">Brain</tissue>
    </source>
</reference>
<reference key="2">
    <citation type="journal article" date="2004" name="Genome Res.">
        <title>The status, quality, and expansion of the NIH full-length cDNA project: the Mammalian Gene Collection (MGC).</title>
        <authorList>
            <consortium name="The MGC Project Team"/>
        </authorList>
    </citation>
    <scope>NUCLEOTIDE SEQUENCE [LARGE SCALE MRNA]</scope>
    <source>
        <tissue>Prostate</tissue>
    </source>
</reference>
<sequence>MPNTAMKKKVLLMGKSGSGKTSMRSIIFANYIARDTRRLGATIDVEHSHVRFLGNLVLNLWDCGGQDTFMENYFTSQRDNIFRNVEVLIYVFDVESRELEKDMHYYQSCLEAILQNSPDAKIFCLVHKMDLVQEDQRDLIFKEREEDLRRLSRPLECACFRTSIWDETLYKAWSSIVYQLIPNVQQLEMNLRNFAQIIEADEVLLFERATFLVISHYQCKEQRDVHRFEKISNIIKQFKLSCSKLAASFQSMEVRNSNFAAFIDIFTSNTYVMVVMSDPSIPSAATLINIRNARKHFEKLERVDGPKHSLLMR</sequence>
<organism>
    <name type="scientific">Rattus norvegicus</name>
    <name type="common">Rat</name>
    <dbReference type="NCBI Taxonomy" id="10116"/>
    <lineage>
        <taxon>Eukaryota</taxon>
        <taxon>Metazoa</taxon>
        <taxon>Chordata</taxon>
        <taxon>Craniata</taxon>
        <taxon>Vertebrata</taxon>
        <taxon>Euteleostomi</taxon>
        <taxon>Mammalia</taxon>
        <taxon>Eutheria</taxon>
        <taxon>Euarchontoglires</taxon>
        <taxon>Glires</taxon>
        <taxon>Rodentia</taxon>
        <taxon>Myomorpha</taxon>
        <taxon>Muroidea</taxon>
        <taxon>Muridae</taxon>
        <taxon>Murinae</taxon>
        <taxon>Rattus</taxon>
    </lineage>
</organism>
<proteinExistence type="evidence at protein level"/>
<name>RRAGA_RAT</name>
<dbReference type="EC" id="3.6.5.-" evidence="1"/>
<dbReference type="EMBL" id="X85183">
    <property type="protein sequence ID" value="CAA59466.1"/>
    <property type="molecule type" value="mRNA"/>
</dbReference>
<dbReference type="EMBL" id="BC061850">
    <property type="protein sequence ID" value="AAH61850.1"/>
    <property type="molecule type" value="mRNA"/>
</dbReference>
<dbReference type="PIR" id="I84474">
    <property type="entry name" value="I84474"/>
</dbReference>
<dbReference type="RefSeq" id="NP_446425.1">
    <property type="nucleotide sequence ID" value="NM_053973.3"/>
</dbReference>
<dbReference type="SMR" id="Q63486"/>
<dbReference type="BioGRID" id="250642">
    <property type="interactions" value="1"/>
</dbReference>
<dbReference type="FunCoup" id="Q63486">
    <property type="interactions" value="3140"/>
</dbReference>
<dbReference type="STRING" id="10116.ENSRNOP00000009225"/>
<dbReference type="iPTMnet" id="Q63486"/>
<dbReference type="PhosphoSitePlus" id="Q63486"/>
<dbReference type="PaxDb" id="10116-ENSRNOP00000009225"/>
<dbReference type="GeneID" id="117044"/>
<dbReference type="KEGG" id="rno:117044"/>
<dbReference type="UCSC" id="RGD:619804">
    <property type="organism name" value="rat"/>
</dbReference>
<dbReference type="AGR" id="RGD:619804"/>
<dbReference type="CTD" id="10670"/>
<dbReference type="RGD" id="619804">
    <property type="gene designation" value="Rraga"/>
</dbReference>
<dbReference type="VEuPathDB" id="HostDB:ENSRNOG00000007051"/>
<dbReference type="eggNOG" id="KOG3886">
    <property type="taxonomic scope" value="Eukaryota"/>
</dbReference>
<dbReference type="HOGENOM" id="CLU_044099_1_0_1"/>
<dbReference type="InParanoid" id="Q63486"/>
<dbReference type="OrthoDB" id="10020193at2759"/>
<dbReference type="PhylomeDB" id="Q63486"/>
<dbReference type="TreeFam" id="TF300616"/>
<dbReference type="Reactome" id="R-RNO-1632852">
    <property type="pathway name" value="Macroautophagy"/>
</dbReference>
<dbReference type="Reactome" id="R-RNO-165159">
    <property type="pathway name" value="MTOR signalling"/>
</dbReference>
<dbReference type="Reactome" id="R-RNO-166208">
    <property type="pathway name" value="mTORC1-mediated signalling"/>
</dbReference>
<dbReference type="Reactome" id="R-RNO-380972">
    <property type="pathway name" value="Energy dependent regulation of mTOR by LKB1-AMPK"/>
</dbReference>
<dbReference type="Reactome" id="R-RNO-5628897">
    <property type="pathway name" value="TP53 Regulates Metabolic Genes"/>
</dbReference>
<dbReference type="Reactome" id="R-RNO-8943724">
    <property type="pathway name" value="Regulation of PTEN gene transcription"/>
</dbReference>
<dbReference type="Reactome" id="R-RNO-9639288">
    <property type="pathway name" value="Amino acids regulate mTORC1"/>
</dbReference>
<dbReference type="PRO" id="PR:Q63486"/>
<dbReference type="Proteomes" id="UP000002494">
    <property type="component" value="Chromosome 5"/>
</dbReference>
<dbReference type="Bgee" id="ENSRNOG00000007051">
    <property type="expression patterns" value="Expressed in cerebellum and 20 other cell types or tissues"/>
</dbReference>
<dbReference type="GO" id="GO:0005737">
    <property type="term" value="C:cytoplasm"/>
    <property type="evidence" value="ECO:0000250"/>
    <property type="project" value="UniProtKB"/>
</dbReference>
<dbReference type="GO" id="GO:1990877">
    <property type="term" value="C:FNIP-folliculin RagC/D GAP"/>
    <property type="evidence" value="ECO:0000266"/>
    <property type="project" value="RGD"/>
</dbReference>
<dbReference type="GO" id="GO:1990130">
    <property type="term" value="C:GATOR1 complex"/>
    <property type="evidence" value="ECO:0000266"/>
    <property type="project" value="RGD"/>
</dbReference>
<dbReference type="GO" id="GO:1990131">
    <property type="term" value="C:Gtr1-Gtr2 GTPase complex"/>
    <property type="evidence" value="ECO:0000318"/>
    <property type="project" value="GO_Central"/>
</dbReference>
<dbReference type="GO" id="GO:0005765">
    <property type="term" value="C:lysosomal membrane"/>
    <property type="evidence" value="ECO:0000250"/>
    <property type="project" value="UniProtKB"/>
</dbReference>
<dbReference type="GO" id="GO:0005764">
    <property type="term" value="C:lysosome"/>
    <property type="evidence" value="ECO:0000250"/>
    <property type="project" value="UniProtKB"/>
</dbReference>
<dbReference type="GO" id="GO:0005654">
    <property type="term" value="C:nucleoplasm"/>
    <property type="evidence" value="ECO:0000266"/>
    <property type="project" value="RGD"/>
</dbReference>
<dbReference type="GO" id="GO:0005634">
    <property type="term" value="C:nucleus"/>
    <property type="evidence" value="ECO:0000250"/>
    <property type="project" value="UniProtKB"/>
</dbReference>
<dbReference type="GO" id="GO:0005525">
    <property type="term" value="F:GTP binding"/>
    <property type="evidence" value="ECO:0000314"/>
    <property type="project" value="RGD"/>
</dbReference>
<dbReference type="GO" id="GO:0003924">
    <property type="term" value="F:GTPase activity"/>
    <property type="evidence" value="ECO:0000250"/>
    <property type="project" value="UniProtKB"/>
</dbReference>
<dbReference type="GO" id="GO:0051219">
    <property type="term" value="F:phosphoprotein binding"/>
    <property type="evidence" value="ECO:0000250"/>
    <property type="project" value="UniProtKB"/>
</dbReference>
<dbReference type="GO" id="GO:0046982">
    <property type="term" value="F:protein heterodimerization activity"/>
    <property type="evidence" value="ECO:0000250"/>
    <property type="project" value="UniProtKB"/>
</dbReference>
<dbReference type="GO" id="GO:0042803">
    <property type="term" value="F:protein homodimerization activity"/>
    <property type="evidence" value="ECO:0000250"/>
    <property type="project" value="UniProtKB"/>
</dbReference>
<dbReference type="GO" id="GO:0043495">
    <property type="term" value="F:protein-membrane adaptor activity"/>
    <property type="evidence" value="ECO:0000250"/>
    <property type="project" value="UniProtKB"/>
</dbReference>
<dbReference type="GO" id="GO:0031625">
    <property type="term" value="F:ubiquitin protein ligase binding"/>
    <property type="evidence" value="ECO:0000266"/>
    <property type="project" value="RGD"/>
</dbReference>
<dbReference type="GO" id="GO:0006915">
    <property type="term" value="P:apoptotic process"/>
    <property type="evidence" value="ECO:0007669"/>
    <property type="project" value="UniProtKB-KW"/>
</dbReference>
<dbReference type="GO" id="GO:0034198">
    <property type="term" value="P:cellular response to amino acid starvation"/>
    <property type="evidence" value="ECO:0000250"/>
    <property type="project" value="UniProtKB"/>
</dbReference>
<dbReference type="GO" id="GO:0071230">
    <property type="term" value="P:cellular response to amino acid stimulus"/>
    <property type="evidence" value="ECO:0000250"/>
    <property type="project" value="UniProtKB"/>
</dbReference>
<dbReference type="GO" id="GO:0031669">
    <property type="term" value="P:cellular response to nutrient levels"/>
    <property type="evidence" value="ECO:0000266"/>
    <property type="project" value="RGD"/>
</dbReference>
<dbReference type="GO" id="GO:0009267">
    <property type="term" value="P:cellular response to starvation"/>
    <property type="evidence" value="ECO:0000266"/>
    <property type="project" value="RGD"/>
</dbReference>
<dbReference type="GO" id="GO:0042593">
    <property type="term" value="P:glucose homeostasis"/>
    <property type="evidence" value="ECO:0000266"/>
    <property type="project" value="RGD"/>
</dbReference>
<dbReference type="GO" id="GO:0035556">
    <property type="term" value="P:intracellular signal transduction"/>
    <property type="evidence" value="ECO:0000266"/>
    <property type="project" value="RGD"/>
</dbReference>
<dbReference type="GO" id="GO:0010507">
    <property type="term" value="P:negative regulation of autophagy"/>
    <property type="evidence" value="ECO:0000250"/>
    <property type="project" value="UniProtKB"/>
</dbReference>
<dbReference type="GO" id="GO:0032008">
    <property type="term" value="P:positive regulation of TOR signaling"/>
    <property type="evidence" value="ECO:0000266"/>
    <property type="project" value="RGD"/>
</dbReference>
<dbReference type="GO" id="GO:1904263">
    <property type="term" value="P:positive regulation of TORC1 signaling"/>
    <property type="evidence" value="ECO:0000250"/>
    <property type="project" value="UniProtKB"/>
</dbReference>
<dbReference type="GO" id="GO:0008104">
    <property type="term" value="P:protein localization"/>
    <property type="evidence" value="ECO:0000250"/>
    <property type="project" value="UniProtKB"/>
</dbReference>
<dbReference type="GO" id="GO:0061462">
    <property type="term" value="P:protein localization to lysosome"/>
    <property type="evidence" value="ECO:0000266"/>
    <property type="project" value="RGD"/>
</dbReference>
<dbReference type="GO" id="GO:0072657">
    <property type="term" value="P:protein localization to membrane"/>
    <property type="evidence" value="ECO:0000250"/>
    <property type="project" value="UniProtKB"/>
</dbReference>
<dbReference type="GO" id="GO:1903432">
    <property type="term" value="P:regulation of TORC1 signaling"/>
    <property type="evidence" value="ECO:0000250"/>
    <property type="project" value="UniProtKB"/>
</dbReference>
<dbReference type="GO" id="GO:0043200">
    <property type="term" value="P:response to amino acid"/>
    <property type="evidence" value="ECO:0000250"/>
    <property type="project" value="UniProtKB"/>
</dbReference>
<dbReference type="GO" id="GO:0033209">
    <property type="term" value="P:tumor necrosis factor-mediated signaling pathway"/>
    <property type="evidence" value="ECO:0000266"/>
    <property type="project" value="RGD"/>
</dbReference>
<dbReference type="CDD" id="cd11384">
    <property type="entry name" value="RagA_like"/>
    <property type="match status" value="1"/>
</dbReference>
<dbReference type="FunFam" id="3.30.450.190:FF:000002">
    <property type="entry name" value="Ras-related GTP-binding protein A"/>
    <property type="match status" value="1"/>
</dbReference>
<dbReference type="FunFam" id="3.40.50.300:FF:000276">
    <property type="entry name" value="Ras-related GTP-binding protein A"/>
    <property type="match status" value="1"/>
</dbReference>
<dbReference type="Gene3D" id="3.30.450.190">
    <property type="match status" value="1"/>
</dbReference>
<dbReference type="Gene3D" id="3.40.50.300">
    <property type="entry name" value="P-loop containing nucleotide triphosphate hydrolases"/>
    <property type="match status" value="1"/>
</dbReference>
<dbReference type="InterPro" id="IPR006762">
    <property type="entry name" value="Gtr1_RagA"/>
</dbReference>
<dbReference type="InterPro" id="IPR027417">
    <property type="entry name" value="P-loop_NTPase"/>
</dbReference>
<dbReference type="InterPro" id="IPR039397">
    <property type="entry name" value="RagA/B"/>
</dbReference>
<dbReference type="PANTHER" id="PTHR11259">
    <property type="entry name" value="RAS-RELATED GTP BINDING RAG/GTR YEAST"/>
    <property type="match status" value="1"/>
</dbReference>
<dbReference type="PANTHER" id="PTHR11259:SF7">
    <property type="entry name" value="RAS-RELATED GTP-BINDING PROTEIN A"/>
    <property type="match status" value="1"/>
</dbReference>
<dbReference type="Pfam" id="PF04670">
    <property type="entry name" value="Gtr1_RagA"/>
    <property type="match status" value="1"/>
</dbReference>
<dbReference type="SUPFAM" id="SSF52540">
    <property type="entry name" value="P-loop containing nucleoside triphosphate hydrolases"/>
    <property type="match status" value="1"/>
</dbReference>
<evidence type="ECO:0000250" key="1">
    <source>
        <dbReference type="UniProtKB" id="Q7L523"/>
    </source>
</evidence>
<evidence type="ECO:0000250" key="2">
    <source>
        <dbReference type="UniProtKB" id="Q80X95"/>
    </source>
</evidence>
<evidence type="ECO:0000269" key="3">
    <source>
    </source>
</evidence>
<evidence type="ECO:0000303" key="4">
    <source>
    </source>
</evidence>
<evidence type="ECO:0000305" key="5"/>
<evidence type="ECO:0000312" key="6">
    <source>
        <dbReference type="EMBL" id="CAA59466.1"/>
    </source>
</evidence>
<evidence type="ECO:0000312" key="7">
    <source>
        <dbReference type="RGD" id="619804"/>
    </source>
</evidence>
<accession>Q63486</accession>
<comment type="function">
    <text evidence="1">Guanine nucleotide-binding protein that plays a crucial role in the cellular response to amino acid availability through regulation of the mTORC1 signaling cascade. Forms heterodimeric Rag complexes with RagC/RRAGC or RagD/RRAGD and cycles between an inactive GDP-bound and an active GTP-bound form: RagA/RRAGA is in its active form when GTP-bound RagA/RRAGA forms a complex with GDP-bound RagC/RRAGC (or RagD/RRAGD) and in an inactive form when GDP-bound RagA/RRAGA heterodimerizes with GTP-bound RagC/RRAGC (or RagD/RRAGD). In its GTP-bound active form, promotes the recruitment of mTORC1 to the lysosomes and its subsequent activation by the GTPase RHEB. Involved in the RCC1/Ran-GTPase pathway. May play a direct role in a TNF-alpha signaling pathway leading to induction of cell death.</text>
</comment>
<comment type="catalytic activity">
    <reaction evidence="1">
        <text>GTP + H2O = GDP + phosphate + H(+)</text>
        <dbReference type="Rhea" id="RHEA:19669"/>
        <dbReference type="ChEBI" id="CHEBI:15377"/>
        <dbReference type="ChEBI" id="CHEBI:15378"/>
        <dbReference type="ChEBI" id="CHEBI:37565"/>
        <dbReference type="ChEBI" id="CHEBI:43474"/>
        <dbReference type="ChEBI" id="CHEBI:58189"/>
    </reaction>
    <physiologicalReaction direction="left-to-right" evidence="1">
        <dbReference type="Rhea" id="RHEA:19670"/>
    </physiologicalReaction>
</comment>
<comment type="activity regulation">
    <text evidence="1">The activation of GTP-binding proteins is generally mediated by a guanine exchange factor (GEF), while inactivation through hydrolysis of bound GTP is catalyzed by a GTPase activating protein (GAP). The Ragulator complex functions as a GEF and promotes the active GTP-bound form. The GATOR1 complex functions as a GAP and stimulates RRAGA GTPase activity to turn it into its inactive GDP-bound form, preventing mTORC1 recruitment and activation.</text>
</comment>
<comment type="subunit">
    <text evidence="1 2">Can occur as a homodimer or as a heterodimer with RRAGC or RRAGD in a sequence-independent manner; heterodimerization stabilizes proteins of the heterodimer. The GTP-bound form of RRAGA (in complex with the GDP-bound form of RRAGC or RRAGD) interacts with RPTOR, thereby promoting recruitment of mTORC1 to the lysosomes. The Rag heterodimer interacts with SLC38A9; the probable amino acid sensor. The Rag heterodimer interacts with the Ragulator complex. The GTP-bound form of RRAGA interacts with NOL8. Component of the lysosomal folliculin complex (LFC), composed of FLCN, FNIP1 (or FNIP2), RagA/RRAGA or RagB/RRAGB GDP-bound, RagC/RRAGC or RagD/RRAGD GTP-bound, and Ragulator. Interacts with SH3BP4; the interaction with this negative regulator is most probably direct, preferentially occurs with the inactive GDP-bound form of RRAGA and is negatively regulated by amino acids. Interacts (polyubiquitinated) with TSC2. Interacts with SESN1, SESN2 and SESN3 (By similarity). Interacts with PIP4P1 (By similarity). Interacts with GPR137B (By similarity). Interacts with WDR83; this interaction regulates the spatiotemporal localization of mTORC1 to the lysosomal surface (By similarity).</text>
</comment>
<comment type="subcellular location">
    <subcellularLocation>
        <location evidence="1">Cytoplasm</location>
    </subcellularLocation>
    <subcellularLocation>
        <location evidence="1">Nucleus</location>
    </subcellularLocation>
    <subcellularLocation>
        <location evidence="1">Lysosome membrane</location>
    </subcellularLocation>
    <text evidence="1">Predominantly cytoplasmic. Recruited to the lysosome surface by the Ragulator complex. May shuttle between the cytoplasm and nucleus, depending on the bound nucleotide state.</text>
</comment>
<comment type="tissue specificity">
    <text evidence="3">Widely expressed as a 1.8 kb transcript. Highly expressed in adrenal gland and detected at lower levels in brain, skeletal muscle, fat cells, liver, spleen, testis, ovary, thymus, and lung.</text>
</comment>
<comment type="PTM">
    <text evidence="1">Polybiquitinated via 'Lys-63'-linked polyubiquitination by RNF152 in response to amino acid starvation: polyubiquitination of the GDP-bound inactive form by RNF152 promotes RRAGA inactivation and interaction with the GATOR1 complex. This does not affect RRAGA degradation.</text>
</comment>
<comment type="similarity">
    <text evidence="5">Belongs to the GTR/RAG GTP-binding protein family.</text>
</comment>
<comment type="caution">
    <text evidence="3">According to a report, has no detectable intrinsic GTPase activity.</text>
</comment>
<keyword id="KW-0053">Apoptosis</keyword>
<keyword id="KW-0963">Cytoplasm</keyword>
<keyword id="KW-0342">GTP-binding</keyword>
<keyword id="KW-0378">Hydrolase</keyword>
<keyword id="KW-1017">Isopeptide bond</keyword>
<keyword id="KW-0458">Lysosome</keyword>
<keyword id="KW-0472">Membrane</keyword>
<keyword id="KW-0547">Nucleotide-binding</keyword>
<keyword id="KW-0539">Nucleus</keyword>
<keyword id="KW-0597">Phosphoprotein</keyword>
<keyword id="KW-1185">Reference proteome</keyword>
<keyword id="KW-0832">Ubl conjugation</keyword>
<feature type="chain" id="PRO_0000239947" description="Ras-related GTP-binding protein A">
    <location>
        <begin position="1"/>
        <end position="313"/>
    </location>
</feature>
<feature type="binding site" evidence="1">
    <location>
        <position position="16"/>
    </location>
    <ligand>
        <name>GTP</name>
        <dbReference type="ChEBI" id="CHEBI:37565"/>
    </ligand>
</feature>
<feature type="binding site" evidence="1">
    <location>
        <position position="17"/>
    </location>
    <ligand>
        <name>GDP</name>
        <dbReference type="ChEBI" id="CHEBI:58189"/>
    </ligand>
</feature>
<feature type="binding site" evidence="1">
    <location>
        <position position="17"/>
    </location>
    <ligand>
        <name>GTP</name>
        <dbReference type="ChEBI" id="CHEBI:37565"/>
    </ligand>
</feature>
<feature type="binding site" evidence="1">
    <location>
        <position position="19"/>
    </location>
    <ligand>
        <name>GDP</name>
        <dbReference type="ChEBI" id="CHEBI:58189"/>
    </ligand>
</feature>
<feature type="binding site" evidence="1">
    <location>
        <position position="19"/>
    </location>
    <ligand>
        <name>GTP</name>
        <dbReference type="ChEBI" id="CHEBI:37565"/>
    </ligand>
</feature>
<feature type="binding site" evidence="1">
    <location>
        <position position="20"/>
    </location>
    <ligand>
        <name>GDP</name>
        <dbReference type="ChEBI" id="CHEBI:58189"/>
    </ligand>
</feature>
<feature type="binding site" evidence="1">
    <location>
        <position position="20"/>
    </location>
    <ligand>
        <name>GTP</name>
        <dbReference type="ChEBI" id="CHEBI:37565"/>
    </ligand>
</feature>
<feature type="binding site" evidence="1">
    <location>
        <position position="21"/>
    </location>
    <ligand>
        <name>GDP</name>
        <dbReference type="ChEBI" id="CHEBI:58189"/>
    </ligand>
</feature>
<feature type="binding site" evidence="1">
    <location>
        <position position="21"/>
    </location>
    <ligand>
        <name>GTP</name>
        <dbReference type="ChEBI" id="CHEBI:37565"/>
    </ligand>
</feature>
<feature type="binding site" evidence="1">
    <location>
        <position position="22"/>
    </location>
    <ligand>
        <name>GDP</name>
        <dbReference type="ChEBI" id="CHEBI:58189"/>
    </ligand>
</feature>
<feature type="binding site" evidence="1">
    <location>
        <position position="22"/>
    </location>
    <ligand>
        <name>GTP</name>
        <dbReference type="ChEBI" id="CHEBI:37565"/>
    </ligand>
</feature>
<feature type="binding site" evidence="1">
    <location>
        <position position="36"/>
    </location>
    <ligand>
        <name>GTP</name>
        <dbReference type="ChEBI" id="CHEBI:37565"/>
    </ligand>
</feature>
<feature type="binding site" evidence="1">
    <location>
        <position position="42"/>
    </location>
    <ligand>
        <name>GTP</name>
        <dbReference type="ChEBI" id="CHEBI:37565"/>
    </ligand>
</feature>
<feature type="binding site" evidence="1">
    <location>
        <position position="65"/>
    </location>
    <ligand>
        <name>GTP</name>
        <dbReference type="ChEBI" id="CHEBI:37565"/>
    </ligand>
</feature>
<feature type="binding site" evidence="1">
    <location>
        <position position="127"/>
    </location>
    <ligand>
        <name>GDP</name>
        <dbReference type="ChEBI" id="CHEBI:58189"/>
    </ligand>
</feature>
<feature type="binding site" evidence="1">
    <location>
        <position position="127"/>
    </location>
    <ligand>
        <name>GTP</name>
        <dbReference type="ChEBI" id="CHEBI:37565"/>
    </ligand>
</feature>
<feature type="binding site" evidence="1">
    <location>
        <position position="130"/>
    </location>
    <ligand>
        <name>GDP</name>
        <dbReference type="ChEBI" id="CHEBI:58189"/>
    </ligand>
</feature>
<feature type="binding site" evidence="1">
    <location>
        <position position="148"/>
    </location>
    <ligand>
        <name>GDP</name>
        <dbReference type="ChEBI" id="CHEBI:58189"/>
    </ligand>
</feature>
<feature type="binding site" evidence="1">
    <location>
        <position position="164"/>
    </location>
    <ligand>
        <name>GDP</name>
        <dbReference type="ChEBI" id="CHEBI:58189"/>
    </ligand>
</feature>
<feature type="binding site" evidence="1">
    <location>
        <position position="164"/>
    </location>
    <ligand>
        <name>GTP</name>
        <dbReference type="ChEBI" id="CHEBI:37565"/>
    </ligand>
</feature>
<feature type="modified residue" description="Phosphoserine" evidence="1">
    <location>
        <position position="309"/>
    </location>
</feature>
<feature type="cross-link" description="Glycyl lysine isopeptide (Lys-Gly) (interchain with G-Cter in ubiquitin)" evidence="1">
    <location>
        <position position="142"/>
    </location>
</feature>
<feature type="cross-link" description="Glycyl lysine isopeptide (Lys-Gly) (interchain with G-Cter in ubiquitin)" evidence="1">
    <location>
        <position position="220"/>
    </location>
</feature>
<feature type="cross-link" description="Glycyl lysine isopeptide (Lys-Gly) (interchain with G-Cter in ubiquitin)" evidence="1">
    <location>
        <position position="230"/>
    </location>
</feature>
<feature type="cross-link" description="Glycyl lysine isopeptide (Lys-Gly) (interchain with G-Cter in ubiquitin)" evidence="1">
    <location>
        <position position="244"/>
    </location>
</feature>
<gene>
    <name evidence="7" type="primary">Rraga</name>
</gene>
<protein>
    <recommendedName>
        <fullName evidence="5">Ras-related GTP-binding protein A</fullName>
        <shortName evidence="1">Rag A</shortName>
        <shortName evidence="4">RagA</shortName>
        <ecNumber evidence="1">3.6.5.-</ecNumber>
    </recommendedName>
</protein>